<feature type="chain" id="PRO_1000196882" description="Thiazole synthase">
    <location>
        <begin position="1"/>
        <end position="262"/>
    </location>
</feature>
<feature type="active site" description="Schiff-base intermediate with DXP" evidence="1">
    <location>
        <position position="105"/>
    </location>
</feature>
<feature type="binding site" evidence="1">
    <location>
        <position position="166"/>
    </location>
    <ligand>
        <name>1-deoxy-D-xylulose 5-phosphate</name>
        <dbReference type="ChEBI" id="CHEBI:57792"/>
    </ligand>
</feature>
<feature type="binding site" evidence="1">
    <location>
        <begin position="192"/>
        <end position="193"/>
    </location>
    <ligand>
        <name>1-deoxy-D-xylulose 5-phosphate</name>
        <dbReference type="ChEBI" id="CHEBI:57792"/>
    </ligand>
</feature>
<feature type="binding site" evidence="1">
    <location>
        <begin position="214"/>
        <end position="215"/>
    </location>
    <ligand>
        <name>1-deoxy-D-xylulose 5-phosphate</name>
        <dbReference type="ChEBI" id="CHEBI:57792"/>
    </ligand>
</feature>
<proteinExistence type="inferred from homology"/>
<gene>
    <name evidence="1" type="primary">thiG</name>
    <name type="ordered locus">PHZ_c1847</name>
</gene>
<reference key="1">
    <citation type="journal article" date="2008" name="BMC Genomics">
        <title>Complete genome of Phenylobacterium zucineum - a novel facultative intracellular bacterium isolated from human erythroleukemia cell line K562.</title>
        <authorList>
            <person name="Luo Y."/>
            <person name="Xu X."/>
            <person name="Ding Z."/>
            <person name="Liu Z."/>
            <person name="Zhang B."/>
            <person name="Yan Z."/>
            <person name="Sun J."/>
            <person name="Hu S."/>
            <person name="Hu X."/>
        </authorList>
    </citation>
    <scope>NUCLEOTIDE SEQUENCE [LARGE SCALE GENOMIC DNA]</scope>
    <source>
        <strain>HLK1</strain>
    </source>
</reference>
<keyword id="KW-0963">Cytoplasm</keyword>
<keyword id="KW-1185">Reference proteome</keyword>
<keyword id="KW-0704">Schiff base</keyword>
<keyword id="KW-0784">Thiamine biosynthesis</keyword>
<keyword id="KW-0808">Transferase</keyword>
<comment type="function">
    <text evidence="1">Catalyzes the rearrangement of 1-deoxy-D-xylulose 5-phosphate (DXP) to produce the thiazole phosphate moiety of thiamine. Sulfur is provided by the thiocarboxylate moiety of the carrier protein ThiS. In vitro, sulfur can be provided by H(2)S.</text>
</comment>
<comment type="catalytic activity">
    <reaction evidence="1">
        <text>[ThiS sulfur-carrier protein]-C-terminal-Gly-aminoethanethioate + 2-iminoacetate + 1-deoxy-D-xylulose 5-phosphate = [ThiS sulfur-carrier protein]-C-terminal Gly-Gly + 2-[(2R,5Z)-2-carboxy-4-methylthiazol-5(2H)-ylidene]ethyl phosphate + 2 H2O + H(+)</text>
        <dbReference type="Rhea" id="RHEA:26297"/>
        <dbReference type="Rhea" id="RHEA-COMP:12909"/>
        <dbReference type="Rhea" id="RHEA-COMP:19908"/>
        <dbReference type="ChEBI" id="CHEBI:15377"/>
        <dbReference type="ChEBI" id="CHEBI:15378"/>
        <dbReference type="ChEBI" id="CHEBI:57792"/>
        <dbReference type="ChEBI" id="CHEBI:62899"/>
        <dbReference type="ChEBI" id="CHEBI:77846"/>
        <dbReference type="ChEBI" id="CHEBI:90778"/>
        <dbReference type="ChEBI" id="CHEBI:232372"/>
        <dbReference type="EC" id="2.8.1.10"/>
    </reaction>
</comment>
<comment type="pathway">
    <text evidence="1">Cofactor biosynthesis; thiamine diphosphate biosynthesis.</text>
</comment>
<comment type="subunit">
    <text evidence="1">Homotetramer. Forms heterodimers with either ThiH or ThiS.</text>
</comment>
<comment type="subcellular location">
    <subcellularLocation>
        <location evidence="1">Cytoplasm</location>
    </subcellularLocation>
</comment>
<comment type="similarity">
    <text evidence="1">Belongs to the ThiG family.</text>
</comment>
<protein>
    <recommendedName>
        <fullName evidence="1">Thiazole synthase</fullName>
        <ecNumber evidence="1">2.8.1.10</ecNumber>
    </recommendedName>
</protein>
<name>THIG_PHEZH</name>
<organism>
    <name type="scientific">Phenylobacterium zucineum (strain HLK1)</name>
    <dbReference type="NCBI Taxonomy" id="450851"/>
    <lineage>
        <taxon>Bacteria</taxon>
        <taxon>Pseudomonadati</taxon>
        <taxon>Pseudomonadota</taxon>
        <taxon>Alphaproteobacteria</taxon>
        <taxon>Caulobacterales</taxon>
        <taxon>Caulobacteraceae</taxon>
        <taxon>Phenylobacterium</taxon>
    </lineage>
</organism>
<accession>B4RCS1</accession>
<sequence>MDGSVRSEDTWTVAGRTFRSRLIVGTGKYKDYAQNAAAAEAAGAEIVTVAVRRVNLSDPSQPMLVDHVKPDRFTFLPNTAGCFTGEDAIRTLRLAREAGGWDLVKLEVLSNTKHLLPDMEETLRALKLLIADGFQVMVYCSDDPVYAKKLEEAGAAAIMPAAAPIGSGRGIQNALNLALIIEQAKVPVLVDAGVGTASDATIAMELGCDAVLMNTAIAEAKDPIRMARAMRHAVIAGREAYLAGRMPKRMYAEPSSPLSGLI</sequence>
<dbReference type="EC" id="2.8.1.10" evidence="1"/>
<dbReference type="EMBL" id="CP000747">
    <property type="protein sequence ID" value="ACG78258.1"/>
    <property type="molecule type" value="Genomic_DNA"/>
</dbReference>
<dbReference type="RefSeq" id="WP_012522400.1">
    <property type="nucleotide sequence ID" value="NC_011144.1"/>
</dbReference>
<dbReference type="SMR" id="B4RCS1"/>
<dbReference type="STRING" id="450851.PHZ_c1847"/>
<dbReference type="KEGG" id="pzu:PHZ_c1847"/>
<dbReference type="eggNOG" id="COG2022">
    <property type="taxonomic scope" value="Bacteria"/>
</dbReference>
<dbReference type="HOGENOM" id="CLU_062233_1_0_5"/>
<dbReference type="OrthoDB" id="9805935at2"/>
<dbReference type="UniPathway" id="UPA00060"/>
<dbReference type="Proteomes" id="UP000001868">
    <property type="component" value="Chromosome"/>
</dbReference>
<dbReference type="GO" id="GO:0005737">
    <property type="term" value="C:cytoplasm"/>
    <property type="evidence" value="ECO:0007669"/>
    <property type="project" value="UniProtKB-SubCell"/>
</dbReference>
<dbReference type="GO" id="GO:1990107">
    <property type="term" value="F:thiazole synthase activity"/>
    <property type="evidence" value="ECO:0007669"/>
    <property type="project" value="UniProtKB-EC"/>
</dbReference>
<dbReference type="GO" id="GO:0009229">
    <property type="term" value="P:thiamine diphosphate biosynthetic process"/>
    <property type="evidence" value="ECO:0007669"/>
    <property type="project" value="UniProtKB-UniRule"/>
</dbReference>
<dbReference type="CDD" id="cd04728">
    <property type="entry name" value="ThiG"/>
    <property type="match status" value="1"/>
</dbReference>
<dbReference type="Gene3D" id="3.20.20.70">
    <property type="entry name" value="Aldolase class I"/>
    <property type="match status" value="1"/>
</dbReference>
<dbReference type="HAMAP" id="MF_00443">
    <property type="entry name" value="ThiG"/>
    <property type="match status" value="1"/>
</dbReference>
<dbReference type="InterPro" id="IPR013785">
    <property type="entry name" value="Aldolase_TIM"/>
</dbReference>
<dbReference type="InterPro" id="IPR033983">
    <property type="entry name" value="Thiazole_synthase_ThiG"/>
</dbReference>
<dbReference type="InterPro" id="IPR008867">
    <property type="entry name" value="ThiG"/>
</dbReference>
<dbReference type="PANTHER" id="PTHR34266">
    <property type="entry name" value="THIAZOLE SYNTHASE"/>
    <property type="match status" value="1"/>
</dbReference>
<dbReference type="PANTHER" id="PTHR34266:SF2">
    <property type="entry name" value="THIAZOLE SYNTHASE"/>
    <property type="match status" value="1"/>
</dbReference>
<dbReference type="Pfam" id="PF05690">
    <property type="entry name" value="ThiG"/>
    <property type="match status" value="1"/>
</dbReference>
<dbReference type="SUPFAM" id="SSF110399">
    <property type="entry name" value="ThiG-like"/>
    <property type="match status" value="1"/>
</dbReference>
<evidence type="ECO:0000255" key="1">
    <source>
        <dbReference type="HAMAP-Rule" id="MF_00443"/>
    </source>
</evidence>